<name>RS8_LACJO</name>
<comment type="function">
    <text evidence="2">One of the primary rRNA binding proteins, it binds directly to 16S rRNA central domain where it helps coordinate assembly of the platform of the 30S subunit.</text>
</comment>
<comment type="subunit">
    <text evidence="2">Part of the 30S ribosomal subunit. Contacts proteins S5 and S12.</text>
</comment>
<comment type="similarity">
    <text evidence="2">Belongs to the universal ribosomal protein uS8 family.</text>
</comment>
<accession>Q74L76</accession>
<keyword id="KW-0687">Ribonucleoprotein</keyword>
<keyword id="KW-0689">Ribosomal protein</keyword>
<keyword id="KW-0694">RNA-binding</keyword>
<keyword id="KW-0699">rRNA-binding</keyword>
<gene>
    <name evidence="2" type="primary">rpsH</name>
    <name type="ordered locus">LJ_0351</name>
</gene>
<dbReference type="EMBL" id="AE017198">
    <property type="protein sequence ID" value="AAS08339.1"/>
    <property type="molecule type" value="Genomic_DNA"/>
</dbReference>
<dbReference type="RefSeq" id="WP_004895856.1">
    <property type="nucleotide sequence ID" value="NC_005362.1"/>
</dbReference>
<dbReference type="SMR" id="Q74L76"/>
<dbReference type="GeneID" id="83569768"/>
<dbReference type="KEGG" id="ljo:LJ_0351"/>
<dbReference type="eggNOG" id="COG0096">
    <property type="taxonomic scope" value="Bacteria"/>
</dbReference>
<dbReference type="HOGENOM" id="CLU_098428_0_2_9"/>
<dbReference type="Proteomes" id="UP000000581">
    <property type="component" value="Chromosome"/>
</dbReference>
<dbReference type="GO" id="GO:1990904">
    <property type="term" value="C:ribonucleoprotein complex"/>
    <property type="evidence" value="ECO:0007669"/>
    <property type="project" value="UniProtKB-KW"/>
</dbReference>
<dbReference type="GO" id="GO:0005840">
    <property type="term" value="C:ribosome"/>
    <property type="evidence" value="ECO:0007669"/>
    <property type="project" value="UniProtKB-KW"/>
</dbReference>
<dbReference type="GO" id="GO:0019843">
    <property type="term" value="F:rRNA binding"/>
    <property type="evidence" value="ECO:0007669"/>
    <property type="project" value="UniProtKB-UniRule"/>
</dbReference>
<dbReference type="GO" id="GO:0003735">
    <property type="term" value="F:structural constituent of ribosome"/>
    <property type="evidence" value="ECO:0007669"/>
    <property type="project" value="InterPro"/>
</dbReference>
<dbReference type="GO" id="GO:0006412">
    <property type="term" value="P:translation"/>
    <property type="evidence" value="ECO:0007669"/>
    <property type="project" value="UniProtKB-UniRule"/>
</dbReference>
<dbReference type="FunFam" id="3.30.1370.30:FF:000002">
    <property type="entry name" value="30S ribosomal protein S8"/>
    <property type="match status" value="1"/>
</dbReference>
<dbReference type="FunFam" id="3.30.1490.10:FF:000001">
    <property type="entry name" value="30S ribosomal protein S8"/>
    <property type="match status" value="1"/>
</dbReference>
<dbReference type="Gene3D" id="3.30.1370.30">
    <property type="match status" value="1"/>
</dbReference>
<dbReference type="Gene3D" id="3.30.1490.10">
    <property type="match status" value="1"/>
</dbReference>
<dbReference type="HAMAP" id="MF_01302_B">
    <property type="entry name" value="Ribosomal_uS8_B"/>
    <property type="match status" value="1"/>
</dbReference>
<dbReference type="InterPro" id="IPR000630">
    <property type="entry name" value="Ribosomal_uS8"/>
</dbReference>
<dbReference type="InterPro" id="IPR047863">
    <property type="entry name" value="Ribosomal_uS8_CS"/>
</dbReference>
<dbReference type="InterPro" id="IPR035987">
    <property type="entry name" value="Ribosomal_uS8_sf"/>
</dbReference>
<dbReference type="NCBIfam" id="NF001109">
    <property type="entry name" value="PRK00136.1"/>
    <property type="match status" value="1"/>
</dbReference>
<dbReference type="PANTHER" id="PTHR11758">
    <property type="entry name" value="40S RIBOSOMAL PROTEIN S15A"/>
    <property type="match status" value="1"/>
</dbReference>
<dbReference type="Pfam" id="PF00410">
    <property type="entry name" value="Ribosomal_S8"/>
    <property type="match status" value="1"/>
</dbReference>
<dbReference type="SUPFAM" id="SSF56047">
    <property type="entry name" value="Ribosomal protein S8"/>
    <property type="match status" value="1"/>
</dbReference>
<dbReference type="PROSITE" id="PS00053">
    <property type="entry name" value="RIBOSOMAL_S8"/>
    <property type="match status" value="1"/>
</dbReference>
<reference key="1">
    <citation type="journal article" date="2004" name="Proc. Natl. Acad. Sci. U.S.A.">
        <title>The genome sequence of the probiotic intestinal bacterium Lactobacillus johnsonii NCC 533.</title>
        <authorList>
            <person name="Pridmore R.D."/>
            <person name="Berger B."/>
            <person name="Desiere F."/>
            <person name="Vilanova D."/>
            <person name="Barretto C."/>
            <person name="Pittet A.-C."/>
            <person name="Zwahlen M.-C."/>
            <person name="Rouvet M."/>
            <person name="Altermann E."/>
            <person name="Barrangou R."/>
            <person name="Mollet B."/>
            <person name="Mercenier A."/>
            <person name="Klaenhammer T."/>
            <person name="Arigoni F."/>
            <person name="Schell M.A."/>
        </authorList>
    </citation>
    <scope>NUCLEOTIDE SEQUENCE [LARGE SCALE GENOMIC DNA]</scope>
    <source>
        <strain>CNCM I-1225 / La1 / NCC 533</strain>
    </source>
</reference>
<protein>
    <recommendedName>
        <fullName evidence="2">Small ribosomal subunit protein uS8</fullName>
    </recommendedName>
    <alternativeName>
        <fullName evidence="3">30S ribosomal protein S8</fullName>
    </alternativeName>
</protein>
<feature type="initiator methionine" description="Removed" evidence="1">
    <location>
        <position position="1"/>
    </location>
</feature>
<feature type="chain" id="PRO_0000126423" description="Small ribosomal subunit protein uS8">
    <location>
        <begin position="2"/>
        <end position="132"/>
    </location>
</feature>
<organism>
    <name type="scientific">Lactobacillus johnsonii (strain CNCM I-12250 / La1 / NCC 533)</name>
    <dbReference type="NCBI Taxonomy" id="257314"/>
    <lineage>
        <taxon>Bacteria</taxon>
        <taxon>Bacillati</taxon>
        <taxon>Bacillota</taxon>
        <taxon>Bacilli</taxon>
        <taxon>Lactobacillales</taxon>
        <taxon>Lactobacillaceae</taxon>
        <taxon>Lactobacillus</taxon>
    </lineage>
</organism>
<proteinExistence type="inferred from homology"/>
<sequence>MVMTDPIADYLTRIRNANMAKHTSVEIPASSMKKSLSEILKNEGFIRDYQVEDDNKQGMIKIFLKYGPNNERVISGLKRISKPGLRNYVSAENLPKVLNGLGIAIISTSAGVITDKEAREKNVGGEVIAYVW</sequence>
<evidence type="ECO:0000250" key="1"/>
<evidence type="ECO:0000255" key="2">
    <source>
        <dbReference type="HAMAP-Rule" id="MF_01302"/>
    </source>
</evidence>
<evidence type="ECO:0000305" key="3"/>